<accession>C3PL14</accession>
<keyword id="KW-1185">Reference proteome</keyword>
<keyword id="KW-0687">Ribonucleoprotein</keyword>
<keyword id="KW-0689">Ribosomal protein</keyword>
<comment type="similarity">
    <text evidence="1">Belongs to the bacterial ribosomal protein bL34 family.</text>
</comment>
<reference key="1">
    <citation type="journal article" date="2010" name="BMC Genomics">
        <title>Complete genome sequence and lifestyle of black-pigmented Corynebacterium aurimucosum ATCC 700975 (formerly C. nigricans CN-1) isolated from a vaginal swab of a woman with spontaneous abortion.</title>
        <authorList>
            <person name="Trost E."/>
            <person name="Gotker S."/>
            <person name="Schneider J."/>
            <person name="Schneiker-Bekel S."/>
            <person name="Szczepanowski R."/>
            <person name="Tilker A."/>
            <person name="Viehoever P."/>
            <person name="Arnold W."/>
            <person name="Bekel T."/>
            <person name="Blom J."/>
            <person name="Gartemann K.H."/>
            <person name="Linke B."/>
            <person name="Goesmann A."/>
            <person name="Puhler A."/>
            <person name="Shukla S.K."/>
            <person name="Tauch A."/>
        </authorList>
    </citation>
    <scope>NUCLEOTIDE SEQUENCE [LARGE SCALE GENOMIC DNA]</scope>
    <source>
        <strain>ATCC 700975 / DSM 44827 / CIP 107346 / CN-1</strain>
    </source>
</reference>
<proteinExistence type="inferred from homology"/>
<feature type="chain" id="PRO_1000134437" description="Large ribosomal subunit protein bL34">
    <location>
        <begin position="1"/>
        <end position="47"/>
    </location>
</feature>
<feature type="region of interest" description="Disordered" evidence="2">
    <location>
        <begin position="1"/>
        <end position="28"/>
    </location>
</feature>
<feature type="compositionally biased region" description="Basic residues" evidence="2">
    <location>
        <begin position="1"/>
        <end position="22"/>
    </location>
</feature>
<name>RL34_CORA7</name>
<sequence>MAKGKRTFQPNNRRRARKHGFRTRMSTRAGRAIVAARRKKGRAKLTA</sequence>
<gene>
    <name evidence="1" type="primary">rpmH</name>
    <name type="ordered locus">cauri_2539</name>
</gene>
<organism>
    <name type="scientific">Corynebacterium aurimucosum (strain ATCC 700975 / DSM 44827 / CIP 107346 / CN-1)</name>
    <name type="common">Corynebacterium nigricans</name>
    <dbReference type="NCBI Taxonomy" id="548476"/>
    <lineage>
        <taxon>Bacteria</taxon>
        <taxon>Bacillati</taxon>
        <taxon>Actinomycetota</taxon>
        <taxon>Actinomycetes</taxon>
        <taxon>Mycobacteriales</taxon>
        <taxon>Corynebacteriaceae</taxon>
        <taxon>Corynebacterium</taxon>
    </lineage>
</organism>
<dbReference type="EMBL" id="CP001601">
    <property type="protein sequence ID" value="ACP34130.1"/>
    <property type="molecule type" value="Genomic_DNA"/>
</dbReference>
<dbReference type="RefSeq" id="WP_003847033.1">
    <property type="nucleotide sequence ID" value="NZ_ACLH01000030.1"/>
</dbReference>
<dbReference type="SMR" id="C3PL14"/>
<dbReference type="STRING" id="548476.cauri_2539"/>
<dbReference type="GeneID" id="88918637"/>
<dbReference type="KEGG" id="car:cauri_2539"/>
<dbReference type="eggNOG" id="COG0230">
    <property type="taxonomic scope" value="Bacteria"/>
</dbReference>
<dbReference type="HOGENOM" id="CLU_129938_2_1_11"/>
<dbReference type="OrthoDB" id="9804832at2"/>
<dbReference type="Proteomes" id="UP000002077">
    <property type="component" value="Chromosome"/>
</dbReference>
<dbReference type="GO" id="GO:1990904">
    <property type="term" value="C:ribonucleoprotein complex"/>
    <property type="evidence" value="ECO:0007669"/>
    <property type="project" value="UniProtKB-KW"/>
</dbReference>
<dbReference type="GO" id="GO:0005840">
    <property type="term" value="C:ribosome"/>
    <property type="evidence" value="ECO:0007669"/>
    <property type="project" value="UniProtKB-KW"/>
</dbReference>
<dbReference type="GO" id="GO:0003735">
    <property type="term" value="F:structural constituent of ribosome"/>
    <property type="evidence" value="ECO:0007669"/>
    <property type="project" value="InterPro"/>
</dbReference>
<dbReference type="GO" id="GO:0006412">
    <property type="term" value="P:translation"/>
    <property type="evidence" value="ECO:0007669"/>
    <property type="project" value="UniProtKB-UniRule"/>
</dbReference>
<dbReference type="FunFam" id="1.10.287.3980:FF:000001">
    <property type="entry name" value="Mitochondrial ribosomal protein L34"/>
    <property type="match status" value="1"/>
</dbReference>
<dbReference type="Gene3D" id="1.10.287.3980">
    <property type="match status" value="1"/>
</dbReference>
<dbReference type="HAMAP" id="MF_00391">
    <property type="entry name" value="Ribosomal_bL34"/>
    <property type="match status" value="1"/>
</dbReference>
<dbReference type="InterPro" id="IPR000271">
    <property type="entry name" value="Ribosomal_bL34"/>
</dbReference>
<dbReference type="InterPro" id="IPR020939">
    <property type="entry name" value="Ribosomal_bL34_CS"/>
</dbReference>
<dbReference type="NCBIfam" id="TIGR01030">
    <property type="entry name" value="rpmH_bact"/>
    <property type="match status" value="1"/>
</dbReference>
<dbReference type="PANTHER" id="PTHR14503:SF4">
    <property type="entry name" value="LARGE RIBOSOMAL SUBUNIT PROTEIN BL34M"/>
    <property type="match status" value="1"/>
</dbReference>
<dbReference type="PANTHER" id="PTHR14503">
    <property type="entry name" value="MITOCHONDRIAL RIBOSOMAL PROTEIN 34 FAMILY MEMBER"/>
    <property type="match status" value="1"/>
</dbReference>
<dbReference type="Pfam" id="PF00468">
    <property type="entry name" value="Ribosomal_L34"/>
    <property type="match status" value="1"/>
</dbReference>
<dbReference type="PROSITE" id="PS00784">
    <property type="entry name" value="RIBOSOMAL_L34"/>
    <property type="match status" value="1"/>
</dbReference>
<protein>
    <recommendedName>
        <fullName evidence="1">Large ribosomal subunit protein bL34</fullName>
    </recommendedName>
    <alternativeName>
        <fullName evidence="3">50S ribosomal protein L34</fullName>
    </alternativeName>
</protein>
<evidence type="ECO:0000255" key="1">
    <source>
        <dbReference type="HAMAP-Rule" id="MF_00391"/>
    </source>
</evidence>
<evidence type="ECO:0000256" key="2">
    <source>
        <dbReference type="SAM" id="MobiDB-lite"/>
    </source>
</evidence>
<evidence type="ECO:0000305" key="3"/>